<feature type="chain" id="PRO_0000346042" description="Protoheme IX farnesyltransferase">
    <location>
        <begin position="1"/>
        <end position="287"/>
    </location>
</feature>
<feature type="transmembrane region" description="Helical" evidence="1">
    <location>
        <begin position="19"/>
        <end position="39"/>
    </location>
</feature>
<feature type="transmembrane region" description="Helical" evidence="1">
    <location>
        <begin position="100"/>
        <end position="120"/>
    </location>
</feature>
<feature type="transmembrane region" description="Helical" evidence="1">
    <location>
        <begin position="134"/>
        <end position="154"/>
    </location>
</feature>
<feature type="transmembrane region" description="Helical" evidence="1">
    <location>
        <begin position="162"/>
        <end position="182"/>
    </location>
</feature>
<feature type="transmembrane region" description="Helical" evidence="1">
    <location>
        <begin position="212"/>
        <end position="232"/>
    </location>
</feature>
<feature type="transmembrane region" description="Helical" evidence="1">
    <location>
        <begin position="233"/>
        <end position="253"/>
    </location>
</feature>
<feature type="transmembrane region" description="Helical" evidence="1">
    <location>
        <begin position="267"/>
        <end position="287"/>
    </location>
</feature>
<organism>
    <name type="scientific">Nitratidesulfovibrio vulgaris (strain DP4)</name>
    <name type="common">Desulfovibrio vulgaris</name>
    <dbReference type="NCBI Taxonomy" id="391774"/>
    <lineage>
        <taxon>Bacteria</taxon>
        <taxon>Pseudomonadati</taxon>
        <taxon>Thermodesulfobacteriota</taxon>
        <taxon>Desulfovibrionia</taxon>
        <taxon>Desulfovibrionales</taxon>
        <taxon>Desulfovibrionaceae</taxon>
        <taxon>Nitratidesulfovibrio</taxon>
    </lineage>
</organism>
<dbReference type="EC" id="2.5.1.141" evidence="1"/>
<dbReference type="EMBL" id="CP000527">
    <property type="protein sequence ID" value="ABM28367.1"/>
    <property type="molecule type" value="Genomic_DNA"/>
</dbReference>
<dbReference type="RefSeq" id="WP_011792210.1">
    <property type="nucleotide sequence ID" value="NC_008751.1"/>
</dbReference>
<dbReference type="SMR" id="A1VD51"/>
<dbReference type="KEGG" id="dvl:Dvul_1349"/>
<dbReference type="HOGENOM" id="CLU_029631_3_1_7"/>
<dbReference type="UniPathway" id="UPA00834">
    <property type="reaction ID" value="UER00712"/>
</dbReference>
<dbReference type="Proteomes" id="UP000009173">
    <property type="component" value="Chromosome"/>
</dbReference>
<dbReference type="GO" id="GO:0005886">
    <property type="term" value="C:plasma membrane"/>
    <property type="evidence" value="ECO:0007669"/>
    <property type="project" value="UniProtKB-SubCell"/>
</dbReference>
<dbReference type="GO" id="GO:0008495">
    <property type="term" value="F:protoheme IX farnesyltransferase activity"/>
    <property type="evidence" value="ECO:0007669"/>
    <property type="project" value="UniProtKB-UniRule"/>
</dbReference>
<dbReference type="GO" id="GO:0048034">
    <property type="term" value="P:heme O biosynthetic process"/>
    <property type="evidence" value="ECO:0007669"/>
    <property type="project" value="UniProtKB-UniRule"/>
</dbReference>
<dbReference type="Gene3D" id="1.10.357.140">
    <property type="entry name" value="UbiA prenyltransferase"/>
    <property type="match status" value="1"/>
</dbReference>
<dbReference type="HAMAP" id="MF_00154">
    <property type="entry name" value="CyoE_CtaB"/>
    <property type="match status" value="1"/>
</dbReference>
<dbReference type="InterPro" id="IPR006369">
    <property type="entry name" value="Protohaem_IX_farnesylTrfase"/>
</dbReference>
<dbReference type="InterPro" id="IPR000537">
    <property type="entry name" value="UbiA_prenyltransferase"/>
</dbReference>
<dbReference type="InterPro" id="IPR044878">
    <property type="entry name" value="UbiA_sf"/>
</dbReference>
<dbReference type="PANTHER" id="PTHR43448:SF7">
    <property type="entry name" value="4-HYDROXYBENZOATE SOLANESYLTRANSFERASE"/>
    <property type="match status" value="1"/>
</dbReference>
<dbReference type="PANTHER" id="PTHR43448">
    <property type="entry name" value="PROTOHEME IX FARNESYLTRANSFERASE, MITOCHONDRIAL"/>
    <property type="match status" value="1"/>
</dbReference>
<dbReference type="Pfam" id="PF01040">
    <property type="entry name" value="UbiA"/>
    <property type="match status" value="1"/>
</dbReference>
<evidence type="ECO:0000255" key="1">
    <source>
        <dbReference type="HAMAP-Rule" id="MF_00154"/>
    </source>
</evidence>
<accession>A1VD51</accession>
<proteinExistence type="inferred from homology"/>
<name>COXX_NITV4</name>
<gene>
    <name evidence="1" type="primary">ctaB</name>
    <name type="ordered locus">Dvul_1349</name>
</gene>
<keyword id="KW-0997">Cell inner membrane</keyword>
<keyword id="KW-1003">Cell membrane</keyword>
<keyword id="KW-0350">Heme biosynthesis</keyword>
<keyword id="KW-0472">Membrane</keyword>
<keyword id="KW-0808">Transferase</keyword>
<keyword id="KW-0812">Transmembrane</keyword>
<keyword id="KW-1133">Transmembrane helix</keyword>
<protein>
    <recommendedName>
        <fullName evidence="1">Protoheme IX farnesyltransferase</fullName>
        <ecNumber evidence="1">2.5.1.141</ecNumber>
    </recommendedName>
    <alternativeName>
        <fullName evidence="1">Heme B farnesyltransferase</fullName>
    </alternativeName>
    <alternativeName>
        <fullName evidence="1">Heme O synthase</fullName>
    </alternativeName>
</protein>
<comment type="function">
    <text evidence="1">Converts heme B (protoheme IX) to heme O by substitution of the vinyl group on carbon 2 of heme B porphyrin ring with a hydroxyethyl farnesyl side group.</text>
</comment>
<comment type="catalytic activity">
    <reaction evidence="1">
        <text>heme b + (2E,6E)-farnesyl diphosphate + H2O = Fe(II)-heme o + diphosphate</text>
        <dbReference type="Rhea" id="RHEA:28070"/>
        <dbReference type="ChEBI" id="CHEBI:15377"/>
        <dbReference type="ChEBI" id="CHEBI:33019"/>
        <dbReference type="ChEBI" id="CHEBI:60344"/>
        <dbReference type="ChEBI" id="CHEBI:60530"/>
        <dbReference type="ChEBI" id="CHEBI:175763"/>
        <dbReference type="EC" id="2.5.1.141"/>
    </reaction>
</comment>
<comment type="pathway">
    <text evidence="1">Porphyrin-containing compound metabolism; heme O biosynthesis; heme O from protoheme: step 1/1.</text>
</comment>
<comment type="subcellular location">
    <subcellularLocation>
        <location evidence="1">Cell inner membrane</location>
        <topology evidence="1">Multi-pass membrane protein</topology>
    </subcellularLocation>
</comment>
<comment type="miscellaneous">
    <text evidence="1">Carbon 2 of the heme B porphyrin ring is defined according to the Fischer nomenclature.</text>
</comment>
<comment type="similarity">
    <text evidence="1">Belongs to the UbiA prenyltransferase family. Protoheme IX farnesyltransferase subfamily.</text>
</comment>
<reference key="1">
    <citation type="journal article" date="2009" name="Environ. Microbiol.">
        <title>Contribution of mobile genetic elements to Desulfovibrio vulgaris genome plasticity.</title>
        <authorList>
            <person name="Walker C.B."/>
            <person name="Stolyar S."/>
            <person name="Chivian D."/>
            <person name="Pinel N."/>
            <person name="Gabster J.A."/>
            <person name="Dehal P.S."/>
            <person name="He Z."/>
            <person name="Yang Z.K."/>
            <person name="Yen H.C."/>
            <person name="Zhou J."/>
            <person name="Wall J.D."/>
            <person name="Hazen T.C."/>
            <person name="Arkin A.P."/>
            <person name="Stahl D.A."/>
        </authorList>
    </citation>
    <scope>NUCLEOTIDE SEQUENCE [LARGE SCALE GENOMIC DNA]</scope>
    <source>
        <strain>DP4</strain>
    </source>
</reference>
<sequence>MGRCTIADVAMLIRWRVSLMVAGATFFGAMLAVPHVTITHLLASLATFLLAGGCSAINQVQEADLDAVIPRTASRPIPCGRIGHMYGSLMGLALVTVGWMVLCLAGGLTSLLVGIGIVAVYNGLYTPLKRRTSFALLVGAAAGAMPPVVGWLAVGGHPASPMLVVVYTLYLLWQIPHFWLHAARDREAYRKARLPLPLLSLPHERYARLLKVWFHAYAVAVLMVPAFPLLEGVGMRIMVTLCGIALLFAAMLAVRKRRVALHIADAVLCAVMVVLLIDRLAIPVSLF</sequence>